<name>ATG11_PICAN</name>
<dbReference type="EMBL" id="AY366190">
    <property type="protein sequence ID" value="AAR12210.1"/>
    <property type="molecule type" value="Genomic_DNA"/>
</dbReference>
<dbReference type="SMR" id="Q67C55"/>
<dbReference type="PhylomeDB" id="Q67C55"/>
<dbReference type="GO" id="GO:1990316">
    <property type="term" value="C:Atg1/ULK1 kinase complex"/>
    <property type="evidence" value="ECO:0007669"/>
    <property type="project" value="TreeGrafter"/>
</dbReference>
<dbReference type="GO" id="GO:0034045">
    <property type="term" value="C:phagophore assembly site membrane"/>
    <property type="evidence" value="ECO:0007669"/>
    <property type="project" value="UniProtKB-SubCell"/>
</dbReference>
<dbReference type="GO" id="GO:0005774">
    <property type="term" value="C:vacuolar membrane"/>
    <property type="evidence" value="ECO:0007669"/>
    <property type="project" value="UniProtKB-SubCell"/>
</dbReference>
<dbReference type="GO" id="GO:0060090">
    <property type="term" value="F:molecular adaptor activity"/>
    <property type="evidence" value="ECO:0007669"/>
    <property type="project" value="TreeGrafter"/>
</dbReference>
<dbReference type="GO" id="GO:0019901">
    <property type="term" value="F:protein kinase binding"/>
    <property type="evidence" value="ECO:0007669"/>
    <property type="project" value="TreeGrafter"/>
</dbReference>
<dbReference type="GO" id="GO:0000045">
    <property type="term" value="P:autophagosome assembly"/>
    <property type="evidence" value="ECO:0007669"/>
    <property type="project" value="InterPro"/>
</dbReference>
<dbReference type="GO" id="GO:0000422">
    <property type="term" value="P:autophagy of mitochondrion"/>
    <property type="evidence" value="ECO:0007669"/>
    <property type="project" value="TreeGrafter"/>
</dbReference>
<dbReference type="GO" id="GO:0034727">
    <property type="term" value="P:piecemeal microautophagy of the nucleus"/>
    <property type="evidence" value="ECO:0007669"/>
    <property type="project" value="TreeGrafter"/>
</dbReference>
<dbReference type="GO" id="GO:0015031">
    <property type="term" value="P:protein transport"/>
    <property type="evidence" value="ECO:0007669"/>
    <property type="project" value="UniProtKB-KW"/>
</dbReference>
<dbReference type="GO" id="GO:0061709">
    <property type="term" value="P:reticulophagy"/>
    <property type="evidence" value="ECO:0007669"/>
    <property type="project" value="TreeGrafter"/>
</dbReference>
<dbReference type="GO" id="GO:0034517">
    <property type="term" value="P:ribophagy"/>
    <property type="evidence" value="ECO:0007669"/>
    <property type="project" value="TreeGrafter"/>
</dbReference>
<dbReference type="InterPro" id="IPR040040">
    <property type="entry name" value="ATG11"/>
</dbReference>
<dbReference type="InterPro" id="IPR019460">
    <property type="entry name" value="Atg11_C"/>
</dbReference>
<dbReference type="PANTHER" id="PTHR13222">
    <property type="entry name" value="RB1-INDUCIBLE COILED-COIL"/>
    <property type="match status" value="1"/>
</dbReference>
<dbReference type="PANTHER" id="PTHR13222:SF1">
    <property type="entry name" value="RB1-INDUCIBLE COILED-COIL PROTEIN 1"/>
    <property type="match status" value="1"/>
</dbReference>
<dbReference type="Pfam" id="PF10377">
    <property type="entry name" value="ATG11"/>
    <property type="match status" value="1"/>
</dbReference>
<sequence length="1299" mass="149155">MNISIIQNNNPLSMMSSVYRQNQSQDTNLPSALTIYNSLTGAKVVASAYQFHNLEALKQFIGMSFNVATENLFLLTPFGIKLKFSMIVHEEISEIYVFDRRYFNVNNIEASGNMDNVNDLLAELNQTDFINMIKPLASPLLSEELSVFVEKLTLVLENTTQIKAVDINLNMLRMLLNSLKRNSGWASALLSDFKKTVAFDECTPEDNDLETILTSLNVLIQYVGLVFKTLEKKFNDSIDALVLLQSNSLVDQWRDQYALLKRIPFEFKSGSSNVPEKLFLSQLVNESHLDKCAEESRRLNKSMNERLVMLRSKIEADVIKPRQELLQEYNGYMSQYIRPETDATQKTQKIQDCKRILAELEVHVSKLIQSSSSLPSFEELITTASQTSTTLSASSIANIKKLTQLYKYQESELVPYIFQLANNLYDIQINKLNARKELQTKLICSTLINITKIQLNIMRLSTVLNTEVAKNIASIKENELQLSVVSDLPLMFGIFVIANLNNLKFGISLNNIVKKANEIFEMLRFMESRNRAKWLKEFLASSGADKVEFLHLDEEARERFINENMLSYKLEQVDAIRSKKSPSPVDHPASPVSGQEKHYLTSINRLLHNINGFPAPRPTATELPKQRETNIMTNLARNISVKSIVSYINTLRKEGIDLNIVNRLEECLKDFGITYGAIERKAIETEDGEEIVVKGKNAGDLGTFDVNDVNYMRLFKKFIKSFESEGIVININVNQQDSVSNDELIKGYERRIRKLENVLHTRNFQQFNEQWSRHRPVHTLPNPVSRRQSDMSQEPAVHENTILFNENVVLGRKTIDLPPSHYGERIERLEKENERYRGEIEELKKGTDLAELDRLKKEIEDLQKADMEKDKRLAALEEENKNLKESNEELTNSNKELVNMCEELKSMKSDLLENMTQKESEFGKEAKVNQQEINELKLRIEELEEDESNLVNVNKTLNERLAIKDGLLCQLYELVQGAYGKLNQMSGEIFSNLTRVCLLLESIGLLLIRETPSFDNHPGTLTIKRVKGLRSRKRQIKQASDSTHNGNLQNDTFEDSEHIDNALMEVVSSEVVPEAEQYLHWVDTNVLNYTISSDLGIEDEIEHKKNESSLIDMSLCEESSIEKKVKKLLANYESFNVEQGFQNFLRFNHVDNELVIERVFRRFSDVETLARKLQKDKTQQKQELKMLTAELDGKIAFRNFKVGDLVLFLKTLTPANEELGGGDEQPWAAFNVGCPNYYLKNTKGEGYIELSDRDWLVGRVSKIEPRQVTEQNFHSKTENPFRLAKSVVWYYVEAREVKE</sequence>
<keyword id="KW-0072">Autophagy</keyword>
<keyword id="KW-0175">Coiled coil</keyword>
<keyword id="KW-0472">Membrane</keyword>
<keyword id="KW-0653">Protein transport</keyword>
<keyword id="KW-0813">Transport</keyword>
<keyword id="KW-0926">Vacuole</keyword>
<feature type="chain" id="PRO_0000124551" description="Autophagy-related protein 11">
    <location>
        <begin position="1"/>
        <end position="1299"/>
    </location>
</feature>
<feature type="coiled-coil region" evidence="2">
    <location>
        <begin position="294"/>
        <end position="367"/>
    </location>
</feature>
<feature type="coiled-coil region" evidence="2">
    <location>
        <begin position="820"/>
        <end position="962"/>
    </location>
</feature>
<feature type="coiled-coil region" evidence="2">
    <location>
        <begin position="1164"/>
        <end position="1194"/>
    </location>
</feature>
<protein>
    <recommendedName>
        <fullName>Autophagy-related protein 11</fullName>
    </recommendedName>
    <alternativeName>
        <fullName>Peroxisome degradation deficient protein 18</fullName>
    </alternativeName>
</protein>
<comment type="function">
    <text evidence="1 3">Involved in cytoplasm to vacuole transport (Cvt), pexophagy, mitophagy and nucleophagy. Recruits mitochondria for their selective degradation via autophagy (mitophagy) during starvation. Works as scaffold proteins that recruit ATG proteins to the pre-autophagosome (PAS), the site of vesicle/autophagosome formation. Required for the Cvt vesicles completion (By similarity).</text>
</comment>
<comment type="subunit">
    <text evidence="1">Homodimer.</text>
</comment>
<comment type="subcellular location">
    <subcellularLocation>
        <location evidence="1">Preautophagosomal structure membrane</location>
        <topology evidence="1">Peripheral membrane protein</topology>
    </subcellularLocation>
    <subcellularLocation>
        <location evidence="1">Vacuole membrane</location>
        <topology evidence="1">Peripheral membrane protein</topology>
    </subcellularLocation>
    <text evidence="1">During pexophagy, accumulates in the vacuolar membrane region, where the peroxisomes contact the vacuole.</text>
</comment>
<comment type="similarity">
    <text evidence="4">Belongs to the ATG11 family.</text>
</comment>
<organism>
    <name type="scientific">Pichia angusta</name>
    <name type="common">Yeast</name>
    <name type="synonym">Hansenula polymorpha</name>
    <dbReference type="NCBI Taxonomy" id="870730"/>
    <lineage>
        <taxon>Eukaryota</taxon>
        <taxon>Fungi</taxon>
        <taxon>Dikarya</taxon>
        <taxon>Ascomycota</taxon>
        <taxon>Saccharomycotina</taxon>
        <taxon>Pichiomycetes</taxon>
        <taxon>Pichiales</taxon>
        <taxon>Pichiaceae</taxon>
        <taxon>Ogataea</taxon>
    </lineage>
</organism>
<evidence type="ECO:0000250" key="1"/>
<evidence type="ECO:0000255" key="2"/>
<evidence type="ECO:0000269" key="3">
    <source>
    </source>
</evidence>
<evidence type="ECO:0000305" key="4"/>
<accession>Q67C55</accession>
<reference key="1">
    <citation type="submission" date="2003-08" db="EMBL/GenBank/DDBJ databases">
        <title>Hansenula polymorpha PDD18 is involved in peroxisome degradation, but not in general autophagy.</title>
        <authorList>
            <person name="Komduur J.A."/>
            <person name="Kiel J.A.K.W."/>
            <person name="van der Klei I.J."/>
            <person name="Veenhuis M."/>
        </authorList>
    </citation>
    <scope>NUCLEOTIDE SEQUENCE [GENOMIC DNA]</scope>
    <source>
        <strain>ATCC 14754 / CBS 1976 / JCM 3620 / NBRC 0799 / NCYC 495 / NRRL Y-1798 / VKM Y-1397</strain>
    </source>
</reference>
<reference key="2">
    <citation type="journal article" date="2001" name="Mol. Genet. Genomics">
        <title>Tagging Hansenula polymorpha genes by random integration of linear DNA fragments (RALF).</title>
        <authorList>
            <person name="van Dijk R."/>
            <person name="Faber K.N."/>
            <person name="Hammond A.T."/>
            <person name="Glick B.S."/>
            <person name="Veenhuis M."/>
            <person name="Kiel J.A.K.W."/>
        </authorList>
    </citation>
    <scope>FUNCTION</scope>
</reference>
<reference key="3">
    <citation type="journal article" date="2003" name="Dev. Cell">
        <title>A unified nomenclature for yeast autophagy-related genes.</title>
        <authorList>
            <person name="Klionsky D.J."/>
            <person name="Cregg J.M."/>
            <person name="Dunn W.A. Jr."/>
            <person name="Emr S.D."/>
            <person name="Sakai Y."/>
            <person name="Sandoval I.V."/>
            <person name="Sibirny A."/>
            <person name="Subramani S."/>
            <person name="Thumm M."/>
            <person name="Veenhuis M."/>
            <person name="Ohsumi Y."/>
        </authorList>
    </citation>
    <scope>NOMENCLATURE</scope>
</reference>
<gene>
    <name type="primary">ATG11</name>
    <name type="synonym">PDD18</name>
</gene>
<proteinExistence type="inferred from homology"/>